<name>CAPP_SALTI</name>
<proteinExistence type="inferred from homology"/>
<sequence length="883" mass="98998">MNEQYSALRSNVSMLGKVLGETIKDALGEHILDRVETIRKLSKSSRAGNEANRQELLTTLQNLSNDELLPVARAFSQFLNLANTAEQYHSISPKGEAASNPEVIAHTLRKLKNQPDLNDATIKKAVESLSLELVLTAHPTEITRRTLIHKMGEINNCLKQLDNTDIADYERHQVMRRLRQLIAQSWHTDEIRKQRPSPVDEAKWGFAVVENSLWQGVPNYLRELNEQLEENLGYKLPVDFVPVRFTSWMGGDRDGNPNVTAEITRHVLLLSRWKATDLFLKDIHVLVSELSMVDATPELLALVGEEGASEPYRYLMKKLRARLMATQSWLEARLKGEKLPKPAGLLTQNEQLWEPLYACYQSLQACGMGIIANGELLDTLRRVKCFGVPLVRIDIRQESTRHTEALGEITRYLGIGDYESWSEADKQAFLIRELNSKRPLLPRNWEPSNDTREVLETCKVIAEAPKGSIAAYVISMAKTPSDVLAVHLLLKEAGIGFAMPVAPLFETLDDLNNADDVMTQLLNIDWYRGLIQGKQMVMIGYSDSAKDAGVMAASWAQYQAQDALIKTCEKAGIELTLFHGRGGSIGRGGAPAHAALLSQPPGSLKGGLRVTEQGEMIRFKYGLPEVTVSSLSLYTSAILEANLLPPPEPKDSWRHIMDELSVISCETYRGYVRENKDFVPYFRSATPEQELGKLPLGSRPAKRRPTGGVESLRAIPWIFAWTQNRLMLPAWLGAGTALQKVVEDGKQSELEAMCRDWPFFSTRLGMLEMVFSKADLWLADYYDQRLVAKTLWPLGKELRDLLEEDIKVVLAIANDSHLMADLPWIAESIQLRNVYTDPLNVLQAELLYRSRLTEEQGKSPDPRVEQALMVTIAGVAAGMRNTG</sequence>
<protein>
    <recommendedName>
        <fullName>Phosphoenolpyruvate carboxylase</fullName>
        <shortName>PEPC</shortName>
        <shortName>PEPCase</shortName>
        <ecNumber>4.1.1.31</ecNumber>
    </recommendedName>
</protein>
<keyword id="KW-0021">Allosteric enzyme</keyword>
<keyword id="KW-0120">Carbon dioxide fixation</keyword>
<keyword id="KW-0456">Lyase</keyword>
<keyword id="KW-0460">Magnesium</keyword>
<evidence type="ECO:0000250" key="1"/>
<evidence type="ECO:0000305" key="2"/>
<gene>
    <name type="primary">ppc</name>
    <name type="ordered locus">STY3754</name>
    <name type="ordered locus">t3505</name>
</gene>
<feature type="chain" id="PRO_0000166621" description="Phosphoenolpyruvate carboxylase">
    <location>
        <begin position="1"/>
        <end position="883"/>
    </location>
</feature>
<feature type="active site" evidence="1">
    <location>
        <position position="138"/>
    </location>
</feature>
<feature type="active site" evidence="1">
    <location>
        <position position="546"/>
    </location>
</feature>
<organism>
    <name type="scientific">Salmonella typhi</name>
    <dbReference type="NCBI Taxonomy" id="90370"/>
    <lineage>
        <taxon>Bacteria</taxon>
        <taxon>Pseudomonadati</taxon>
        <taxon>Pseudomonadota</taxon>
        <taxon>Gammaproteobacteria</taxon>
        <taxon>Enterobacterales</taxon>
        <taxon>Enterobacteriaceae</taxon>
        <taxon>Salmonella</taxon>
    </lineage>
</organism>
<reference key="1">
    <citation type="journal article" date="2001" name="Nature">
        <title>Complete genome sequence of a multiple drug resistant Salmonella enterica serovar Typhi CT18.</title>
        <authorList>
            <person name="Parkhill J."/>
            <person name="Dougan G."/>
            <person name="James K.D."/>
            <person name="Thomson N.R."/>
            <person name="Pickard D."/>
            <person name="Wain J."/>
            <person name="Churcher C.M."/>
            <person name="Mungall K.L."/>
            <person name="Bentley S.D."/>
            <person name="Holden M.T.G."/>
            <person name="Sebaihia M."/>
            <person name="Baker S."/>
            <person name="Basham D."/>
            <person name="Brooks K."/>
            <person name="Chillingworth T."/>
            <person name="Connerton P."/>
            <person name="Cronin A."/>
            <person name="Davis P."/>
            <person name="Davies R.M."/>
            <person name="Dowd L."/>
            <person name="White N."/>
            <person name="Farrar J."/>
            <person name="Feltwell T."/>
            <person name="Hamlin N."/>
            <person name="Haque A."/>
            <person name="Hien T.T."/>
            <person name="Holroyd S."/>
            <person name="Jagels K."/>
            <person name="Krogh A."/>
            <person name="Larsen T.S."/>
            <person name="Leather S."/>
            <person name="Moule S."/>
            <person name="O'Gaora P."/>
            <person name="Parry C."/>
            <person name="Quail M.A."/>
            <person name="Rutherford K.M."/>
            <person name="Simmonds M."/>
            <person name="Skelton J."/>
            <person name="Stevens K."/>
            <person name="Whitehead S."/>
            <person name="Barrell B.G."/>
        </authorList>
    </citation>
    <scope>NUCLEOTIDE SEQUENCE [LARGE SCALE GENOMIC DNA]</scope>
    <source>
        <strain>CT18</strain>
    </source>
</reference>
<reference key="2">
    <citation type="journal article" date="2003" name="J. Bacteriol.">
        <title>Comparative genomics of Salmonella enterica serovar Typhi strains Ty2 and CT18.</title>
        <authorList>
            <person name="Deng W."/>
            <person name="Liou S.-R."/>
            <person name="Plunkett G. III"/>
            <person name="Mayhew G.F."/>
            <person name="Rose D.J."/>
            <person name="Burland V."/>
            <person name="Kodoyianni V."/>
            <person name="Schwartz D.C."/>
            <person name="Blattner F.R."/>
        </authorList>
    </citation>
    <scope>NUCLEOTIDE SEQUENCE [LARGE SCALE GENOMIC DNA]</scope>
    <source>
        <strain>ATCC 700931 / Ty2</strain>
    </source>
</reference>
<dbReference type="EC" id="4.1.1.31"/>
<dbReference type="EMBL" id="AL513382">
    <property type="protein sequence ID" value="CAD09510.1"/>
    <property type="molecule type" value="Genomic_DNA"/>
</dbReference>
<dbReference type="EMBL" id="AE014613">
    <property type="protein sequence ID" value="AAO71013.1"/>
    <property type="molecule type" value="Genomic_DNA"/>
</dbReference>
<dbReference type="RefSeq" id="NP_457940.1">
    <property type="nucleotide sequence ID" value="NC_003198.1"/>
</dbReference>
<dbReference type="RefSeq" id="WP_001005544.1">
    <property type="nucleotide sequence ID" value="NZ_WSUR01000010.1"/>
</dbReference>
<dbReference type="SMR" id="Q8Z307"/>
<dbReference type="STRING" id="220341.gene:17587621"/>
<dbReference type="KEGG" id="stt:t3505"/>
<dbReference type="KEGG" id="sty:STY3754"/>
<dbReference type="PATRIC" id="fig|220341.7.peg.3829"/>
<dbReference type="eggNOG" id="COG2352">
    <property type="taxonomic scope" value="Bacteria"/>
</dbReference>
<dbReference type="HOGENOM" id="CLU_006557_2_0_6"/>
<dbReference type="OMA" id="VFGWTQS"/>
<dbReference type="OrthoDB" id="9768133at2"/>
<dbReference type="Proteomes" id="UP000000541">
    <property type="component" value="Chromosome"/>
</dbReference>
<dbReference type="Proteomes" id="UP000002670">
    <property type="component" value="Chromosome"/>
</dbReference>
<dbReference type="GO" id="GO:0005829">
    <property type="term" value="C:cytosol"/>
    <property type="evidence" value="ECO:0007669"/>
    <property type="project" value="TreeGrafter"/>
</dbReference>
<dbReference type="GO" id="GO:0000287">
    <property type="term" value="F:magnesium ion binding"/>
    <property type="evidence" value="ECO:0007669"/>
    <property type="project" value="UniProtKB-UniRule"/>
</dbReference>
<dbReference type="GO" id="GO:0008964">
    <property type="term" value="F:phosphoenolpyruvate carboxylase activity"/>
    <property type="evidence" value="ECO:0007669"/>
    <property type="project" value="UniProtKB-UniRule"/>
</dbReference>
<dbReference type="GO" id="GO:0015977">
    <property type="term" value="P:carbon fixation"/>
    <property type="evidence" value="ECO:0007669"/>
    <property type="project" value="UniProtKB-UniRule"/>
</dbReference>
<dbReference type="GO" id="GO:0006107">
    <property type="term" value="P:oxaloacetate metabolic process"/>
    <property type="evidence" value="ECO:0007669"/>
    <property type="project" value="UniProtKB-UniRule"/>
</dbReference>
<dbReference type="GO" id="GO:0006099">
    <property type="term" value="P:tricarboxylic acid cycle"/>
    <property type="evidence" value="ECO:0007669"/>
    <property type="project" value="InterPro"/>
</dbReference>
<dbReference type="FunFam" id="1.20.1440.90:FF:000002">
    <property type="entry name" value="Phosphoenolpyruvate carboxylase"/>
    <property type="match status" value="1"/>
</dbReference>
<dbReference type="Gene3D" id="1.20.1440.90">
    <property type="entry name" value="Phosphoenolpyruvate/pyruvate domain"/>
    <property type="match status" value="1"/>
</dbReference>
<dbReference type="HAMAP" id="MF_00595">
    <property type="entry name" value="PEPcase_type1"/>
    <property type="match status" value="1"/>
</dbReference>
<dbReference type="InterPro" id="IPR021135">
    <property type="entry name" value="PEP_COase"/>
</dbReference>
<dbReference type="InterPro" id="IPR022805">
    <property type="entry name" value="PEP_COase_bac/pln-type"/>
</dbReference>
<dbReference type="InterPro" id="IPR018129">
    <property type="entry name" value="PEP_COase_Lys_AS"/>
</dbReference>
<dbReference type="InterPro" id="IPR033129">
    <property type="entry name" value="PEPCASE_His_AS"/>
</dbReference>
<dbReference type="InterPro" id="IPR015813">
    <property type="entry name" value="Pyrv/PenolPyrv_kinase-like_dom"/>
</dbReference>
<dbReference type="NCBIfam" id="NF000584">
    <property type="entry name" value="PRK00009.1"/>
    <property type="match status" value="1"/>
</dbReference>
<dbReference type="PANTHER" id="PTHR30523">
    <property type="entry name" value="PHOSPHOENOLPYRUVATE CARBOXYLASE"/>
    <property type="match status" value="1"/>
</dbReference>
<dbReference type="PANTHER" id="PTHR30523:SF6">
    <property type="entry name" value="PHOSPHOENOLPYRUVATE CARBOXYLASE"/>
    <property type="match status" value="1"/>
</dbReference>
<dbReference type="Pfam" id="PF00311">
    <property type="entry name" value="PEPcase"/>
    <property type="match status" value="1"/>
</dbReference>
<dbReference type="PRINTS" id="PR00150">
    <property type="entry name" value="PEPCARBXLASE"/>
</dbReference>
<dbReference type="SUPFAM" id="SSF51621">
    <property type="entry name" value="Phosphoenolpyruvate/pyruvate domain"/>
    <property type="match status" value="1"/>
</dbReference>
<dbReference type="PROSITE" id="PS00781">
    <property type="entry name" value="PEPCASE_1"/>
    <property type="match status" value="1"/>
</dbReference>
<dbReference type="PROSITE" id="PS00393">
    <property type="entry name" value="PEPCASE_2"/>
    <property type="match status" value="1"/>
</dbReference>
<comment type="function">
    <text evidence="1">Forms oxaloacetate, a four-carbon dicarboxylic acid source for the tricarboxylic acid cycle.</text>
</comment>
<comment type="catalytic activity">
    <reaction>
        <text>oxaloacetate + phosphate = phosphoenolpyruvate + hydrogencarbonate</text>
        <dbReference type="Rhea" id="RHEA:28370"/>
        <dbReference type="ChEBI" id="CHEBI:16452"/>
        <dbReference type="ChEBI" id="CHEBI:17544"/>
        <dbReference type="ChEBI" id="CHEBI:43474"/>
        <dbReference type="ChEBI" id="CHEBI:58702"/>
        <dbReference type="EC" id="4.1.1.31"/>
    </reaction>
</comment>
<comment type="cofactor">
    <cofactor evidence="1">
        <name>Mg(2+)</name>
        <dbReference type="ChEBI" id="CHEBI:18420"/>
    </cofactor>
</comment>
<comment type="activity regulation">
    <text evidence="1">The enzyme has distinct binding sites for each of the allosteric effectors such as acetyl-CoA, fructose 1,6-bisphosphate, guanosine 3'-diphosphate 5'-diphosphate, long chain fatty acids, and L-aspartate.</text>
</comment>
<comment type="subunit">
    <text evidence="1">Homotetramer.</text>
</comment>
<comment type="similarity">
    <text evidence="2">Belongs to the PEPCase type 1 family.</text>
</comment>
<accession>Q8Z307</accession>